<name>GDNC_BACLD</name>
<keyword id="KW-1003">Cell membrane</keyword>
<keyword id="KW-0406">Ion transport</keyword>
<keyword id="KW-0472">Membrane</keyword>
<keyword id="KW-1185">Reference proteome</keyword>
<keyword id="KW-0812">Transmembrane</keyword>
<keyword id="KW-1133">Transmembrane helix</keyword>
<keyword id="KW-0813">Transport</keyword>
<sequence length="109" mass="11426">MRWGSVILAALFEIGWVMGLKHADSALEWICTAAAVVMSFYILVKAGEKLPVGTVYAVFTGLGTAGTVVCEIALFNEPANIAKLALIGVLLCGVIGLKLVTNEEKGEAS</sequence>
<organism>
    <name type="scientific">Bacillus licheniformis (strain ATCC 14580 / DSM 13 / JCM 2505 / CCUG 7422 / NBRC 12200 / NCIMB 9375 / NCTC 10341 / NRRL NRS-1264 / Gibson 46)</name>
    <dbReference type="NCBI Taxonomy" id="279010"/>
    <lineage>
        <taxon>Bacteria</taxon>
        <taxon>Bacillati</taxon>
        <taxon>Bacillota</taxon>
        <taxon>Bacilli</taxon>
        <taxon>Bacillales</taxon>
        <taxon>Bacillaceae</taxon>
        <taxon>Bacillus</taxon>
    </lineage>
</organism>
<proteinExistence type="inferred from homology"/>
<feature type="chain" id="PRO_0000108110" description="Probable guanidinium efflux system subunit GdnC">
    <location>
        <begin position="1"/>
        <end position="109"/>
    </location>
</feature>
<feature type="transmembrane region" description="Helical" evidence="2">
    <location>
        <begin position="3"/>
        <end position="23"/>
    </location>
</feature>
<feature type="transmembrane region" description="Helical" evidence="2">
    <location>
        <begin position="26"/>
        <end position="46"/>
    </location>
</feature>
<feature type="transmembrane region" description="Helical" evidence="2">
    <location>
        <begin position="55"/>
        <end position="75"/>
    </location>
</feature>
<feature type="transmembrane region" description="Helical" evidence="2">
    <location>
        <begin position="81"/>
        <end position="101"/>
    </location>
</feature>
<protein>
    <recommendedName>
        <fullName evidence="1">Probable guanidinium efflux system subunit GdnC</fullName>
    </recommendedName>
</protein>
<accession>Q65KV1</accession>
<reference key="1">
    <citation type="journal article" date="2004" name="J. Mol. Microbiol. Biotechnol.">
        <title>The complete genome sequence of Bacillus licheniformis DSM13, an organism with great industrial potential.</title>
        <authorList>
            <person name="Veith B."/>
            <person name="Herzberg C."/>
            <person name="Steckel S."/>
            <person name="Feesche J."/>
            <person name="Maurer K.H."/>
            <person name="Ehrenreich P."/>
            <person name="Baeumer S."/>
            <person name="Henne A."/>
            <person name="Liesegang H."/>
            <person name="Merkl R."/>
            <person name="Ehrenreich A."/>
            <person name="Gottschalk G."/>
        </authorList>
    </citation>
    <scope>NUCLEOTIDE SEQUENCE [LARGE SCALE GENOMIC DNA]</scope>
    <source>
        <strain>ATCC 14580 / DSM 13 / JCM 2505 / CCUG 7422 / NBRC 12200 / NCIMB 9375 / NCTC 10341 / NRRL NRS-1264 / Gibson 46</strain>
    </source>
</reference>
<reference key="2">
    <citation type="journal article" date="2004" name="Genome Biol.">
        <title>Complete genome sequence of the industrial bacterium Bacillus licheniformis and comparisons with closely related Bacillus species.</title>
        <authorList>
            <person name="Rey M.W."/>
            <person name="Ramaiya P."/>
            <person name="Nelson B.A."/>
            <person name="Brody-Karpin S.D."/>
            <person name="Zaretsky E.J."/>
            <person name="Tang M."/>
            <person name="Lopez de Leon A."/>
            <person name="Xiang H."/>
            <person name="Gusti V."/>
            <person name="Clausen I.G."/>
            <person name="Olsen P.B."/>
            <person name="Rasmussen M.D."/>
            <person name="Andersen J.T."/>
            <person name="Joergensen P.L."/>
            <person name="Larsen T.S."/>
            <person name="Sorokin A."/>
            <person name="Bolotin A."/>
            <person name="Lapidus A."/>
            <person name="Galleron N."/>
            <person name="Ehrlich S.D."/>
            <person name="Berka R.M."/>
        </authorList>
    </citation>
    <scope>NUCLEOTIDE SEQUENCE [LARGE SCALE GENOMIC DNA]</scope>
    <source>
        <strain>ATCC 14580 / DSM 13 / JCM 2505 / CCUG 7422 / NBRC 12200 / NCIMB 9375 / NCTC 10341 / NRRL NRS-1264 / Gibson 46</strain>
    </source>
</reference>
<gene>
    <name evidence="1" type="primary">gdnC</name>
    <name type="synonym">ykkC</name>
    <name type="ordered locus">BLi01409</name>
    <name type="ordered locus">BL03755</name>
</gene>
<dbReference type="EMBL" id="AE017333">
    <property type="protein sequence ID" value="AAU40313.1"/>
    <property type="molecule type" value="Genomic_DNA"/>
</dbReference>
<dbReference type="EMBL" id="CP000002">
    <property type="protein sequence ID" value="AAU22960.1"/>
    <property type="molecule type" value="Genomic_DNA"/>
</dbReference>
<dbReference type="RefSeq" id="WP_003180979.1">
    <property type="nucleotide sequence ID" value="NC_006322.1"/>
</dbReference>
<dbReference type="SMR" id="Q65KV1"/>
<dbReference type="STRING" id="279010.BL03755"/>
<dbReference type="DNASU" id="3030456"/>
<dbReference type="KEGG" id="bld:BLi01409"/>
<dbReference type="KEGG" id="bli:BL03755"/>
<dbReference type="eggNOG" id="COG2076">
    <property type="taxonomic scope" value="Bacteria"/>
</dbReference>
<dbReference type="HOGENOM" id="CLU_133067_1_0_9"/>
<dbReference type="Proteomes" id="UP000000606">
    <property type="component" value="Chromosome"/>
</dbReference>
<dbReference type="GO" id="GO:0005886">
    <property type="term" value="C:plasma membrane"/>
    <property type="evidence" value="ECO:0007669"/>
    <property type="project" value="UniProtKB-SubCell"/>
</dbReference>
<dbReference type="GO" id="GO:0022857">
    <property type="term" value="F:transmembrane transporter activity"/>
    <property type="evidence" value="ECO:0007669"/>
    <property type="project" value="InterPro"/>
</dbReference>
<dbReference type="GO" id="GO:0006811">
    <property type="term" value="P:monoatomic ion transport"/>
    <property type="evidence" value="ECO:0007669"/>
    <property type="project" value="UniProtKB-KW"/>
</dbReference>
<dbReference type="FunFam" id="1.10.3730.20:FF:000001">
    <property type="entry name" value="Quaternary ammonium compound resistance transporter SugE"/>
    <property type="match status" value="1"/>
</dbReference>
<dbReference type="Gene3D" id="1.10.3730.20">
    <property type="match status" value="1"/>
</dbReference>
<dbReference type="InterPro" id="IPR000390">
    <property type="entry name" value="Small_drug/metabolite_transptr"/>
</dbReference>
<dbReference type="InterPro" id="IPR045324">
    <property type="entry name" value="Small_multidrug_res"/>
</dbReference>
<dbReference type="PANTHER" id="PTHR30561:SF7">
    <property type="entry name" value="GUANIDINIUM EFFLUX SYSTEM SUBUNIT GDNC-RELATED"/>
    <property type="match status" value="1"/>
</dbReference>
<dbReference type="PANTHER" id="PTHR30561">
    <property type="entry name" value="SMR FAMILY PROTON-DEPENDENT DRUG EFFLUX TRANSPORTER SUGE"/>
    <property type="match status" value="1"/>
</dbReference>
<dbReference type="Pfam" id="PF00893">
    <property type="entry name" value="Multi_Drug_Res"/>
    <property type="match status" value="1"/>
</dbReference>
<dbReference type="SUPFAM" id="SSF103481">
    <property type="entry name" value="Multidrug resistance efflux transporter EmrE"/>
    <property type="match status" value="1"/>
</dbReference>
<comment type="function">
    <text evidence="1">Probably involved in guanidinium transport.</text>
</comment>
<comment type="subunit">
    <text evidence="1">The efflux pump is composed of GdnC and GdnD.</text>
</comment>
<comment type="subcellular location">
    <subcellularLocation>
        <location evidence="3">Cell membrane</location>
        <topology evidence="2">Multi-pass membrane protein</topology>
    </subcellularLocation>
</comment>
<comment type="similarity">
    <text evidence="3">Belongs to the drug/metabolite transporter (DMT) superfamily. Small multidrug resistance (SMR) (TC 2.A.7.1) family. YkkC/YkkD subfamily.</text>
</comment>
<evidence type="ECO:0000250" key="1">
    <source>
        <dbReference type="UniProtKB" id="P49856"/>
    </source>
</evidence>
<evidence type="ECO:0000255" key="2"/>
<evidence type="ECO:0000305" key="3"/>